<evidence type="ECO:0000250" key="1"/>
<evidence type="ECO:0000305" key="2"/>
<evidence type="ECO:0007744" key="3">
    <source>
    </source>
</evidence>
<evidence type="ECO:0007829" key="4">
    <source>
        <dbReference type="PDB" id="4OHQ"/>
    </source>
</evidence>
<gene>
    <name type="primary">TIM</name>
    <name type="ordered locus">At2g21170</name>
    <name type="ORF">F26H11.7</name>
</gene>
<feature type="transit peptide" description="Chloroplast" evidence="1">
    <location>
        <begin position="1"/>
        <end position="60"/>
    </location>
</feature>
<feature type="chain" id="PRO_0000035649" description="Triosephosphate isomerase, chloroplastic">
    <location>
        <begin position="61"/>
        <end position="315"/>
    </location>
</feature>
<feature type="active site" description="Electrophile" evidence="1">
    <location>
        <position position="155"/>
    </location>
</feature>
<feature type="active site" description="Proton acceptor" evidence="1">
    <location>
        <position position="225"/>
    </location>
</feature>
<feature type="binding site" evidence="1">
    <location>
        <position position="71"/>
    </location>
    <ligand>
        <name>substrate</name>
    </ligand>
</feature>
<feature type="binding site" evidence="1">
    <location>
        <position position="73"/>
    </location>
    <ligand>
        <name>substrate</name>
    </ligand>
</feature>
<feature type="modified residue" description="Phosphoserine" evidence="3">
    <location>
        <position position="178"/>
    </location>
</feature>
<feature type="strand" evidence="4">
    <location>
        <begin position="66"/>
        <end position="71"/>
    </location>
</feature>
<feature type="helix" evidence="4">
    <location>
        <begin position="78"/>
        <end position="90"/>
    </location>
</feature>
<feature type="strand" evidence="4">
    <location>
        <begin position="95"/>
        <end position="102"/>
    </location>
</feature>
<feature type="helix" evidence="4">
    <location>
        <begin position="105"/>
        <end position="107"/>
    </location>
</feature>
<feature type="helix" evidence="4">
    <location>
        <begin position="108"/>
        <end position="114"/>
    </location>
</feature>
<feature type="strand" evidence="4">
    <location>
        <begin position="119"/>
        <end position="124"/>
    </location>
</feature>
<feature type="strand" evidence="4">
    <location>
        <begin position="128"/>
        <end position="130"/>
    </location>
</feature>
<feature type="helix" evidence="4">
    <location>
        <begin position="140"/>
        <end position="146"/>
    </location>
</feature>
<feature type="strand" evidence="4">
    <location>
        <begin position="150"/>
        <end position="154"/>
    </location>
</feature>
<feature type="helix" evidence="4">
    <location>
        <begin position="156"/>
        <end position="160"/>
    </location>
</feature>
<feature type="helix" evidence="4">
    <location>
        <begin position="166"/>
        <end position="178"/>
    </location>
</feature>
<feature type="strand" evidence="4">
    <location>
        <begin position="182"/>
        <end position="187"/>
    </location>
</feature>
<feature type="helix" evidence="4">
    <location>
        <begin position="191"/>
        <end position="194"/>
    </location>
</feature>
<feature type="turn" evidence="4">
    <location>
        <begin position="195"/>
        <end position="197"/>
    </location>
</feature>
<feature type="helix" evidence="4">
    <location>
        <begin position="199"/>
        <end position="211"/>
    </location>
</feature>
<feature type="strand" evidence="4">
    <location>
        <begin position="220"/>
        <end position="224"/>
    </location>
</feature>
<feature type="turn" evidence="4">
    <location>
        <begin position="227"/>
        <end position="232"/>
    </location>
</feature>
<feature type="helix" evidence="4">
    <location>
        <begin position="238"/>
        <end position="255"/>
    </location>
</feature>
<feature type="helix" evidence="4">
    <location>
        <begin position="258"/>
        <end position="263"/>
    </location>
</feature>
<feature type="strand" evidence="4">
    <location>
        <begin position="264"/>
        <end position="268"/>
    </location>
</feature>
<feature type="turn" evidence="4">
    <location>
        <begin position="274"/>
        <end position="276"/>
    </location>
</feature>
<feature type="helix" evidence="4">
    <location>
        <begin position="277"/>
        <end position="280"/>
    </location>
</feature>
<feature type="strand" evidence="4">
    <location>
        <begin position="288"/>
        <end position="291"/>
    </location>
</feature>
<feature type="helix" evidence="4">
    <location>
        <begin position="293"/>
        <end position="296"/>
    </location>
</feature>
<feature type="helix" evidence="4">
    <location>
        <begin position="298"/>
        <end position="306"/>
    </location>
</feature>
<feature type="helix" evidence="4">
    <location>
        <begin position="308"/>
        <end position="312"/>
    </location>
</feature>
<protein>
    <recommendedName>
        <fullName>Triosephosphate isomerase, chloroplastic</fullName>
        <shortName>TIM</shortName>
        <shortName>Triose-phosphate isomerase</shortName>
        <ecNumber>5.3.1.1</ecNumber>
    </recommendedName>
</protein>
<comment type="catalytic activity">
    <reaction>
        <text>D-glyceraldehyde 3-phosphate = dihydroxyacetone phosphate</text>
        <dbReference type="Rhea" id="RHEA:18585"/>
        <dbReference type="ChEBI" id="CHEBI:57642"/>
        <dbReference type="ChEBI" id="CHEBI:59776"/>
        <dbReference type="EC" id="5.3.1.1"/>
    </reaction>
</comment>
<comment type="pathway">
    <text>Carbohydrate biosynthesis; Calvin cycle.</text>
</comment>
<comment type="subunit">
    <text evidence="1">Homodimer.</text>
</comment>
<comment type="subcellular location">
    <subcellularLocation>
        <location evidence="1">Plastid</location>
        <location evidence="1">Chloroplast</location>
    </subcellularLocation>
</comment>
<comment type="alternative products">
    <event type="alternative splicing"/>
    <isoform>
        <id>Q9SKP6-1</id>
        <name>1</name>
        <sequence type="displayed"/>
    </isoform>
    <text>A number of isoforms are produced. According to EST sequences.</text>
</comment>
<comment type="miscellaneous">
    <text>In plants, there are two types of TPIS, cytosolic and plastid.</text>
</comment>
<comment type="similarity">
    <text evidence="2">Belongs to the triosephosphate isomerase family.</text>
</comment>
<organism>
    <name type="scientific">Arabidopsis thaliana</name>
    <name type="common">Mouse-ear cress</name>
    <dbReference type="NCBI Taxonomy" id="3702"/>
    <lineage>
        <taxon>Eukaryota</taxon>
        <taxon>Viridiplantae</taxon>
        <taxon>Streptophyta</taxon>
        <taxon>Embryophyta</taxon>
        <taxon>Tracheophyta</taxon>
        <taxon>Spermatophyta</taxon>
        <taxon>Magnoliopsida</taxon>
        <taxon>eudicotyledons</taxon>
        <taxon>Gunneridae</taxon>
        <taxon>Pentapetalae</taxon>
        <taxon>rosids</taxon>
        <taxon>malvids</taxon>
        <taxon>Brassicales</taxon>
        <taxon>Brassicaceae</taxon>
        <taxon>Camelineae</taxon>
        <taxon>Arabidopsis</taxon>
    </lineage>
</organism>
<keyword id="KW-0002">3D-structure</keyword>
<keyword id="KW-0025">Alternative splicing</keyword>
<keyword id="KW-0113">Calvin cycle</keyword>
<keyword id="KW-0150">Chloroplast</keyword>
<keyword id="KW-0413">Isomerase</keyword>
<keyword id="KW-0597">Phosphoprotein</keyword>
<keyword id="KW-0934">Plastid</keyword>
<keyword id="KW-1185">Reference proteome</keyword>
<keyword id="KW-0809">Transit peptide</keyword>
<name>TPIC_ARATH</name>
<sequence length="315" mass="33346">MAATSLTAPPSFSGLRRISPKLDAAAVSSHQSFFHRVNSSTRLVSSSSSSHRSPRGVVAMAGSGKFFVGGNWKCNGTKDSIAKLISDLNSATLEADVDVVVSPPFVYIDQVKSSLTDRIDISGQNSWVGKGGAFTGEISVEQLKDLGCKWVILGHSERRHVIGEKDEFIGKKAAYALSEGLGVIACIGEKLEEREAGKTFDVCFAQLKAFADAVPSWDNIVVAYEPVWAIGTGKVASPQQAQEVHVAVRGWLKKNVSEEVASKTRIIYGGSVNGGNSAELAKEEDIDGFLVGGASLKGPEFATIVNSVTSKKVAA</sequence>
<accession>Q9SKP6</accession>
<reference key="1">
    <citation type="submission" date="2000-03" db="EMBL/GenBank/DDBJ databases">
        <title>Structure and regulation of nuclear genes encoding chloroplast and cytosolic triosephosphate isomerase in Arabidopsis thaliana.</title>
        <authorList>
            <person name="Shih M.-C."/>
        </authorList>
    </citation>
    <scope>NUCLEOTIDE SEQUENCE</scope>
</reference>
<reference key="2">
    <citation type="journal article" date="1999" name="Nature">
        <title>Sequence and analysis of chromosome 2 of the plant Arabidopsis thaliana.</title>
        <authorList>
            <person name="Lin X."/>
            <person name="Kaul S."/>
            <person name="Rounsley S.D."/>
            <person name="Shea T.P."/>
            <person name="Benito M.-I."/>
            <person name="Town C.D."/>
            <person name="Fujii C.Y."/>
            <person name="Mason T.M."/>
            <person name="Bowman C.L."/>
            <person name="Barnstead M.E."/>
            <person name="Feldblyum T.V."/>
            <person name="Buell C.R."/>
            <person name="Ketchum K.A."/>
            <person name="Lee J.J."/>
            <person name="Ronning C.M."/>
            <person name="Koo H.L."/>
            <person name="Moffat K.S."/>
            <person name="Cronin L.A."/>
            <person name="Shen M."/>
            <person name="Pai G."/>
            <person name="Van Aken S."/>
            <person name="Umayam L."/>
            <person name="Tallon L.J."/>
            <person name="Gill J.E."/>
            <person name="Adams M.D."/>
            <person name="Carrera A.J."/>
            <person name="Creasy T.H."/>
            <person name="Goodman H.M."/>
            <person name="Somerville C.R."/>
            <person name="Copenhaver G.P."/>
            <person name="Preuss D."/>
            <person name="Nierman W.C."/>
            <person name="White O."/>
            <person name="Eisen J.A."/>
            <person name="Salzberg S.L."/>
            <person name="Fraser C.M."/>
            <person name="Venter J.C."/>
        </authorList>
    </citation>
    <scope>NUCLEOTIDE SEQUENCE [LARGE SCALE GENOMIC DNA]</scope>
    <source>
        <strain>cv. Columbia</strain>
    </source>
</reference>
<reference key="3">
    <citation type="journal article" date="2017" name="Plant J.">
        <title>Araport11: a complete reannotation of the Arabidopsis thaliana reference genome.</title>
        <authorList>
            <person name="Cheng C.Y."/>
            <person name="Krishnakumar V."/>
            <person name="Chan A.P."/>
            <person name="Thibaud-Nissen F."/>
            <person name="Schobel S."/>
            <person name="Town C.D."/>
        </authorList>
    </citation>
    <scope>GENOME REANNOTATION</scope>
    <source>
        <strain>cv. Columbia</strain>
    </source>
</reference>
<reference key="4">
    <citation type="journal article" date="2003" name="Science">
        <title>Empirical analysis of transcriptional activity in the Arabidopsis genome.</title>
        <authorList>
            <person name="Yamada K."/>
            <person name="Lim J."/>
            <person name="Dale J.M."/>
            <person name="Chen H."/>
            <person name="Shinn P."/>
            <person name="Palm C.J."/>
            <person name="Southwick A.M."/>
            <person name="Wu H.C."/>
            <person name="Kim C.J."/>
            <person name="Nguyen M."/>
            <person name="Pham P.K."/>
            <person name="Cheuk R.F."/>
            <person name="Karlin-Newmann G."/>
            <person name="Liu S.X."/>
            <person name="Lam B."/>
            <person name="Sakano H."/>
            <person name="Wu T."/>
            <person name="Yu G."/>
            <person name="Miranda M."/>
            <person name="Quach H.L."/>
            <person name="Tripp M."/>
            <person name="Chang C.H."/>
            <person name="Lee J.M."/>
            <person name="Toriumi M.J."/>
            <person name="Chan M.M."/>
            <person name="Tang C.C."/>
            <person name="Onodera C.S."/>
            <person name="Deng J.M."/>
            <person name="Akiyama K."/>
            <person name="Ansari Y."/>
            <person name="Arakawa T."/>
            <person name="Banh J."/>
            <person name="Banno F."/>
            <person name="Bowser L."/>
            <person name="Brooks S.Y."/>
            <person name="Carninci P."/>
            <person name="Chao Q."/>
            <person name="Choy N."/>
            <person name="Enju A."/>
            <person name="Goldsmith A.D."/>
            <person name="Gurjal M."/>
            <person name="Hansen N.F."/>
            <person name="Hayashizaki Y."/>
            <person name="Johnson-Hopson C."/>
            <person name="Hsuan V.W."/>
            <person name="Iida K."/>
            <person name="Karnes M."/>
            <person name="Khan S."/>
            <person name="Koesema E."/>
            <person name="Ishida J."/>
            <person name="Jiang P.X."/>
            <person name="Jones T."/>
            <person name="Kawai J."/>
            <person name="Kamiya A."/>
            <person name="Meyers C."/>
            <person name="Nakajima M."/>
            <person name="Narusaka M."/>
            <person name="Seki M."/>
            <person name="Sakurai T."/>
            <person name="Satou M."/>
            <person name="Tamse R."/>
            <person name="Vaysberg M."/>
            <person name="Wallender E.K."/>
            <person name="Wong C."/>
            <person name="Yamamura Y."/>
            <person name="Yuan S."/>
            <person name="Shinozaki K."/>
            <person name="Davis R.W."/>
            <person name="Theologis A."/>
            <person name="Ecker J.R."/>
        </authorList>
    </citation>
    <scope>NUCLEOTIDE SEQUENCE [LARGE SCALE MRNA]</scope>
    <source>
        <strain>cv. Columbia</strain>
    </source>
</reference>
<reference key="5">
    <citation type="submission" date="2002-03" db="EMBL/GenBank/DDBJ databases">
        <title>Full-length cDNA from Arabidopsis thaliana.</title>
        <authorList>
            <person name="Brover V.V."/>
            <person name="Troukhan M.E."/>
            <person name="Alexandrov N.A."/>
            <person name="Lu Y.-P."/>
            <person name="Flavell R.B."/>
            <person name="Feldmann K.A."/>
        </authorList>
    </citation>
    <scope>NUCLEOTIDE SEQUENCE [LARGE SCALE MRNA]</scope>
</reference>
<reference key="6">
    <citation type="journal article" date="2012" name="J. Proteome Res.">
        <title>Identification of phosphoproteins in Arabidopsis thaliana leaves using polyethylene glycol fractionation, immobilized metal-ion affinity chromatography, two-dimensional gel electrophoresis and mass spectrometry.</title>
        <authorList>
            <person name="Aryal U.K."/>
            <person name="Krochko J.E."/>
            <person name="Ross A.R."/>
        </authorList>
    </citation>
    <scope>PHOSPHORYLATION [LARGE SCALE ANALYSIS] AT SER-178</scope>
    <scope>IDENTIFICATION BY MASS SPECTROMETRY [LARGE SCALE ANALYSIS]</scope>
</reference>
<proteinExistence type="evidence at protein level"/>
<dbReference type="EC" id="5.3.1.1"/>
<dbReference type="EMBL" id="AC006264">
    <property type="protein sequence ID" value="AAD29799.1"/>
    <property type="molecule type" value="Genomic_DNA"/>
</dbReference>
<dbReference type="EMBL" id="CP002685">
    <property type="protein sequence ID" value="AEC07131.1"/>
    <property type="molecule type" value="Genomic_DNA"/>
</dbReference>
<dbReference type="EMBL" id="CP002685">
    <property type="protein sequence ID" value="ANM61768.1"/>
    <property type="molecule type" value="Genomic_DNA"/>
</dbReference>
<dbReference type="EMBL" id="AF247559">
    <property type="protein sequence ID" value="AAF70259.1"/>
    <property type="molecule type" value="mRNA"/>
</dbReference>
<dbReference type="EMBL" id="AF378898">
    <property type="protein sequence ID" value="AAK55701.1"/>
    <property type="molecule type" value="mRNA"/>
</dbReference>
<dbReference type="EMBL" id="AY052748">
    <property type="protein sequence ID" value="AAK96462.1"/>
    <property type="molecule type" value="mRNA"/>
</dbReference>
<dbReference type="EMBL" id="AY087893">
    <property type="protein sequence ID" value="AAM65444.1"/>
    <property type="molecule type" value="mRNA"/>
</dbReference>
<dbReference type="PIR" id="A84598">
    <property type="entry name" value="A84598"/>
</dbReference>
<dbReference type="RefSeq" id="NP_001323967.1">
    <molecule id="Q9SKP6-1"/>
    <property type="nucleotide sequence ID" value="NM_001335732.1"/>
</dbReference>
<dbReference type="RefSeq" id="NP_179713.1">
    <molecule id="Q9SKP6-1"/>
    <property type="nucleotide sequence ID" value="NM_127687.4"/>
</dbReference>
<dbReference type="PDB" id="4OHQ">
    <property type="method" value="X-ray"/>
    <property type="resolution" value="2.15 A"/>
    <property type="chains" value="A/B=60-315"/>
</dbReference>
<dbReference type="PDBsum" id="4OHQ"/>
<dbReference type="SMR" id="Q9SKP6"/>
<dbReference type="BioGRID" id="2005">
    <property type="interactions" value="20"/>
</dbReference>
<dbReference type="FunCoup" id="Q9SKP6">
    <property type="interactions" value="3041"/>
</dbReference>
<dbReference type="IntAct" id="Q9SKP6">
    <property type="interactions" value="1"/>
</dbReference>
<dbReference type="STRING" id="3702.Q9SKP6"/>
<dbReference type="iPTMnet" id="Q9SKP6"/>
<dbReference type="PaxDb" id="3702-AT2G21170.1"/>
<dbReference type="ProteomicsDB" id="232434">
    <molecule id="Q9SKP6-1"/>
</dbReference>
<dbReference type="EnsemblPlants" id="AT2G21170.1">
    <molecule id="Q9SKP6-1"/>
    <property type="protein sequence ID" value="AT2G21170.1"/>
    <property type="gene ID" value="AT2G21170"/>
</dbReference>
<dbReference type="EnsemblPlants" id="AT2G21170.3">
    <molecule id="Q9SKP6-1"/>
    <property type="protein sequence ID" value="AT2G21170.3"/>
    <property type="gene ID" value="AT2G21170"/>
</dbReference>
<dbReference type="GeneID" id="816652"/>
<dbReference type="Gramene" id="AT2G21170.1">
    <molecule id="Q9SKP6-1"/>
    <property type="protein sequence ID" value="AT2G21170.1"/>
    <property type="gene ID" value="AT2G21170"/>
</dbReference>
<dbReference type="Gramene" id="AT2G21170.3">
    <molecule id="Q9SKP6-1"/>
    <property type="protein sequence ID" value="AT2G21170.3"/>
    <property type="gene ID" value="AT2G21170"/>
</dbReference>
<dbReference type="KEGG" id="ath:AT2G21170"/>
<dbReference type="Araport" id="AT2G21170"/>
<dbReference type="TAIR" id="AT2G21170">
    <property type="gene designation" value="TIM"/>
</dbReference>
<dbReference type="eggNOG" id="KOG1643">
    <property type="taxonomic scope" value="Eukaryota"/>
</dbReference>
<dbReference type="HOGENOM" id="CLU_024251_2_0_1"/>
<dbReference type="InParanoid" id="Q9SKP6"/>
<dbReference type="OMA" id="STYCPQF"/>
<dbReference type="OrthoDB" id="6715177at2759"/>
<dbReference type="PhylomeDB" id="Q9SKP6"/>
<dbReference type="BioCyc" id="ARA:AT2G21170-MONOMER"/>
<dbReference type="UniPathway" id="UPA00116"/>
<dbReference type="CD-CODE" id="4299E36E">
    <property type="entry name" value="Nucleolus"/>
</dbReference>
<dbReference type="EvolutionaryTrace" id="Q9SKP6"/>
<dbReference type="PRO" id="PR:Q9SKP6"/>
<dbReference type="Proteomes" id="UP000006548">
    <property type="component" value="Chromosome 2"/>
</dbReference>
<dbReference type="ExpressionAtlas" id="Q9SKP6">
    <property type="expression patterns" value="baseline and differential"/>
</dbReference>
<dbReference type="GO" id="GO:0048046">
    <property type="term" value="C:apoplast"/>
    <property type="evidence" value="ECO:0007005"/>
    <property type="project" value="TAIR"/>
</dbReference>
<dbReference type="GO" id="GO:0009507">
    <property type="term" value="C:chloroplast"/>
    <property type="evidence" value="ECO:0000314"/>
    <property type="project" value="TAIR"/>
</dbReference>
<dbReference type="GO" id="GO:0009941">
    <property type="term" value="C:chloroplast envelope"/>
    <property type="evidence" value="ECO:0007005"/>
    <property type="project" value="TAIR"/>
</dbReference>
<dbReference type="GO" id="GO:0009570">
    <property type="term" value="C:chloroplast stroma"/>
    <property type="evidence" value="ECO:0007005"/>
    <property type="project" value="TAIR"/>
</dbReference>
<dbReference type="GO" id="GO:0005739">
    <property type="term" value="C:mitochondrion"/>
    <property type="evidence" value="ECO:0007005"/>
    <property type="project" value="TAIR"/>
</dbReference>
<dbReference type="GO" id="GO:0009579">
    <property type="term" value="C:thylakoid"/>
    <property type="evidence" value="ECO:0007005"/>
    <property type="project" value="TAIR"/>
</dbReference>
<dbReference type="GO" id="GO:0004807">
    <property type="term" value="F:triose-phosphate isomerase activity"/>
    <property type="evidence" value="ECO:0000314"/>
    <property type="project" value="TAIR"/>
</dbReference>
<dbReference type="GO" id="GO:0009658">
    <property type="term" value="P:chloroplast organization"/>
    <property type="evidence" value="ECO:0000315"/>
    <property type="project" value="TAIR"/>
</dbReference>
<dbReference type="GO" id="GO:0046166">
    <property type="term" value="P:glyceraldehyde-3-phosphate biosynthetic process"/>
    <property type="evidence" value="ECO:0000314"/>
    <property type="project" value="TAIR"/>
</dbReference>
<dbReference type="GO" id="GO:0019563">
    <property type="term" value="P:glycerol catabolic process"/>
    <property type="evidence" value="ECO:0000315"/>
    <property type="project" value="TAIR"/>
</dbReference>
<dbReference type="GO" id="GO:0006096">
    <property type="term" value="P:glycolytic process"/>
    <property type="evidence" value="ECO:0007669"/>
    <property type="project" value="InterPro"/>
</dbReference>
<dbReference type="GO" id="GO:0080022">
    <property type="term" value="P:primary root development"/>
    <property type="evidence" value="ECO:0000315"/>
    <property type="project" value="TAIR"/>
</dbReference>
<dbReference type="GO" id="GO:0019253">
    <property type="term" value="P:reductive pentose-phosphate cycle"/>
    <property type="evidence" value="ECO:0007669"/>
    <property type="project" value="UniProtKB-UniPathway"/>
</dbReference>
<dbReference type="GO" id="GO:0006642">
    <property type="term" value="P:triglyceride mobilization"/>
    <property type="evidence" value="ECO:0000315"/>
    <property type="project" value="TAIR"/>
</dbReference>
<dbReference type="CDD" id="cd00311">
    <property type="entry name" value="TIM"/>
    <property type="match status" value="1"/>
</dbReference>
<dbReference type="FunFam" id="3.20.20.70:FF:000025">
    <property type="entry name" value="Triosephosphate isomerase"/>
    <property type="match status" value="1"/>
</dbReference>
<dbReference type="Gene3D" id="3.20.20.70">
    <property type="entry name" value="Aldolase class I"/>
    <property type="match status" value="1"/>
</dbReference>
<dbReference type="HAMAP" id="MF_00147_B">
    <property type="entry name" value="TIM_B"/>
    <property type="match status" value="1"/>
</dbReference>
<dbReference type="InterPro" id="IPR013785">
    <property type="entry name" value="Aldolase_TIM"/>
</dbReference>
<dbReference type="InterPro" id="IPR035990">
    <property type="entry name" value="TIM_sf"/>
</dbReference>
<dbReference type="InterPro" id="IPR022896">
    <property type="entry name" value="TrioseP_Isoase_bac/euk"/>
</dbReference>
<dbReference type="InterPro" id="IPR000652">
    <property type="entry name" value="Triosephosphate_isomerase"/>
</dbReference>
<dbReference type="InterPro" id="IPR020861">
    <property type="entry name" value="Triosephosphate_isomerase_AS"/>
</dbReference>
<dbReference type="NCBIfam" id="TIGR00419">
    <property type="entry name" value="tim"/>
    <property type="match status" value="1"/>
</dbReference>
<dbReference type="PANTHER" id="PTHR21139">
    <property type="entry name" value="TRIOSEPHOSPHATE ISOMERASE"/>
    <property type="match status" value="1"/>
</dbReference>
<dbReference type="PANTHER" id="PTHR21139:SF2">
    <property type="entry name" value="TRIOSEPHOSPHATE ISOMERASE"/>
    <property type="match status" value="1"/>
</dbReference>
<dbReference type="Pfam" id="PF00121">
    <property type="entry name" value="TIM"/>
    <property type="match status" value="1"/>
</dbReference>
<dbReference type="SUPFAM" id="SSF51351">
    <property type="entry name" value="Triosephosphate isomerase (TIM)"/>
    <property type="match status" value="1"/>
</dbReference>
<dbReference type="PROSITE" id="PS00171">
    <property type="entry name" value="TIM_1"/>
    <property type="match status" value="1"/>
</dbReference>
<dbReference type="PROSITE" id="PS51440">
    <property type="entry name" value="TIM_2"/>
    <property type="match status" value="1"/>
</dbReference>